<comment type="function">
    <text>This molybdenum-iron protein is part of the nitrogenase complex that catalyzes the key enzymatic reactions in nitrogen fixation.</text>
</comment>
<comment type="catalytic activity">
    <reaction>
        <text>N2 + 8 reduced [2Fe-2S]-[ferredoxin] + 16 ATP + 16 H2O = H2 + 8 oxidized [2Fe-2S]-[ferredoxin] + 2 NH4(+) + 16 ADP + 16 phosphate + 6 H(+)</text>
        <dbReference type="Rhea" id="RHEA:21448"/>
        <dbReference type="Rhea" id="RHEA-COMP:10000"/>
        <dbReference type="Rhea" id="RHEA-COMP:10001"/>
        <dbReference type="ChEBI" id="CHEBI:15377"/>
        <dbReference type="ChEBI" id="CHEBI:15378"/>
        <dbReference type="ChEBI" id="CHEBI:17997"/>
        <dbReference type="ChEBI" id="CHEBI:18276"/>
        <dbReference type="ChEBI" id="CHEBI:28938"/>
        <dbReference type="ChEBI" id="CHEBI:30616"/>
        <dbReference type="ChEBI" id="CHEBI:33737"/>
        <dbReference type="ChEBI" id="CHEBI:33738"/>
        <dbReference type="ChEBI" id="CHEBI:43474"/>
        <dbReference type="ChEBI" id="CHEBI:456216"/>
        <dbReference type="EC" id="1.18.6.1"/>
    </reaction>
</comment>
<comment type="cofactor">
    <cofactor>
        <name>[8Fe-7S] cluster</name>
        <dbReference type="ChEBI" id="CHEBI:21143"/>
    </cofactor>
    <text>Binds 1 [8Fe-7S] cluster per heterodimer.</text>
</comment>
<comment type="subunit">
    <text>Tetramer of two alpha and two beta chains. Forms complex with the iron protein (nitrogenase component 2).</text>
</comment>
<comment type="similarity">
    <text evidence="1">Belongs to the NifD/NifK/NifE/NifN family.</text>
</comment>
<comment type="caution">
    <text evidence="1">The authors of PubMed:3211766 originally stated that their sequence was from Frankia sp.</text>
</comment>
<name>NIFK_KLEPN</name>
<proteinExistence type="evidence at protein level"/>
<organism>
    <name type="scientific">Klebsiella pneumoniae</name>
    <dbReference type="NCBI Taxonomy" id="573"/>
    <lineage>
        <taxon>Bacteria</taxon>
        <taxon>Pseudomonadati</taxon>
        <taxon>Pseudomonadota</taxon>
        <taxon>Gammaproteobacteria</taxon>
        <taxon>Enterobacterales</taxon>
        <taxon>Enterobacteriaceae</taxon>
        <taxon>Klebsiella/Raoultella group</taxon>
        <taxon>Klebsiella</taxon>
        <taxon>Klebsiella pneumoniae complex</taxon>
    </lineage>
</organism>
<evidence type="ECO:0000305" key="1"/>
<evidence type="ECO:0007829" key="2">
    <source>
        <dbReference type="PDB" id="1QGU"/>
    </source>
</evidence>
<accession>P09772</accession>
<accession>P09771</accession>
<keyword id="KW-0002">3D-structure</keyword>
<keyword id="KW-0067">ATP-binding</keyword>
<keyword id="KW-0408">Iron</keyword>
<keyword id="KW-0411">Iron-sulfur</keyword>
<keyword id="KW-0479">Metal-binding</keyword>
<keyword id="KW-0535">Nitrogen fixation</keyword>
<keyword id="KW-0547">Nucleotide-binding</keyword>
<keyword id="KW-0560">Oxidoreductase</keyword>
<gene>
    <name type="primary">nifK</name>
</gene>
<sequence length="520" mass="58408">MSQTIDKINSCYPLFEQDEYQELFRNKRQLEEAHDAQRVQEVFAWTTTAEYEALNFRREALTVDPAKACQPLGAVLCSLGFANTLPYVHGSQGCVAYFRTYFNRHFKEPIACVSDSMTEDAAVFGGNNNMNLGLQNASALYKPEIIAVSTTCMAEVIGDDLQAFIANAKKDGFVDSSIAVPHAHTPSFIGSHVTGWDNMFEGFAKTFTADYQGQPGKLPKLNLVTGFETYLGNFRVLKRMMEQMAVPCSLLSDPSEVLDTPADGHYRMYSGGTTQQEMKEAPDAIDTLLLQPWQLLKSKKVVQEMWNQPATEVAIPLGLAATDELLMTVSQLSGKPIADALTLERGRLVDMMLDSHTWLHGKKFGLYGDPDFVMGLTRFLLELGCEPTVILSHNANKRWQKAMNKMLDASPYGRDSEVFINCDLWHFRSLMFTRQPDFMIGNSYGKFIQRDTLAKGKAFEVPLIRLGFPLFDRHHLHRQTTWGYEGAMNIVTTLVNAVLEKLDSDTSQLGKTDYSFDLVR</sequence>
<feature type="chain" id="PRO_0000153101" description="Nitrogenase molybdenum-iron protein beta chain">
    <location>
        <begin position="1"/>
        <end position="520"/>
    </location>
</feature>
<feature type="binding site">
    <location>
        <position position="69"/>
    </location>
    <ligand>
        <name>[8Fe-7S] cluster</name>
        <dbReference type="ChEBI" id="CHEBI:21143"/>
        <note>ligand shared with alpha chain</note>
    </ligand>
</feature>
<feature type="binding site">
    <location>
        <position position="94"/>
    </location>
    <ligand>
        <name>[8Fe-7S] cluster</name>
        <dbReference type="ChEBI" id="CHEBI:21143"/>
        <note>ligand shared with alpha chain</note>
    </ligand>
</feature>
<feature type="binding site">
    <location>
        <position position="152"/>
    </location>
    <ligand>
        <name>[8Fe-7S] cluster</name>
        <dbReference type="ChEBI" id="CHEBI:21143"/>
        <note>ligand shared with alpha chain</note>
    </ligand>
</feature>
<feature type="binding site">
    <location>
        <position position="187"/>
    </location>
    <ligand>
        <name>[8Fe-7S] cluster</name>
        <dbReference type="ChEBI" id="CHEBI:21143"/>
        <note>ligand shared with alpha chain</note>
    </ligand>
</feature>
<feature type="sequence conflict" description="In Ref. 4; CAA31180." evidence="1" ref="4">
    <original>F</original>
    <variation>V</variation>
    <location>
        <position position="24"/>
    </location>
</feature>
<feature type="sequence conflict" description="In Ref. 4; CAA31180." evidence="1" ref="4">
    <original>A</original>
    <variation>R</variation>
    <location>
        <position position="33"/>
    </location>
</feature>
<feature type="sequence conflict" description="In Ref. 4; CAA31180." evidence="1" ref="4">
    <original>RR</original>
    <variation>H</variation>
    <location>
        <begin position="57"/>
        <end position="58"/>
    </location>
</feature>
<feature type="sequence conflict" description="In Ref. 2 and 3." evidence="1" ref="2 3">
    <original>R</original>
    <variation>Q</variation>
    <location>
        <position position="57"/>
    </location>
</feature>
<feature type="sequence conflict" description="In Ref. 4; CAA31180." evidence="1" ref="4">
    <original>QP</original>
    <variation>HA</variation>
    <location>
        <begin position="70"/>
        <end position="71"/>
    </location>
</feature>
<feature type="sequence conflict" description="In Ref. 4; CAA31180." evidence="1" ref="4">
    <original>R</original>
    <variation>G</variation>
    <location>
        <position position="99"/>
    </location>
</feature>
<feature type="sequence conflict" description="In Ref. 4; CAA31180." evidence="1" ref="4">
    <original>A</original>
    <variation>R</variation>
    <location>
        <position position="163"/>
    </location>
</feature>
<feature type="sequence conflict" description="In Ref. 4; CAA31180." evidence="1" ref="4">
    <original>V</original>
    <variation>W</variation>
    <location>
        <position position="180"/>
    </location>
</feature>
<feature type="sequence conflict" description="In Ref. 4." evidence="1" ref="4">
    <original>L</original>
    <variation>LKL</variation>
    <location>
        <position position="221"/>
    </location>
</feature>
<feature type="sequence conflict" description="In Ref. 4; CAA31180." evidence="1" ref="4">
    <original>T</original>
    <variation>P</variation>
    <location>
        <position position="225"/>
    </location>
</feature>
<feature type="sequence conflict" description="In Ref. 4." evidence="1" ref="4">
    <original>G</original>
    <variation>GTG</variation>
    <location>
        <position position="232"/>
    </location>
</feature>
<feature type="sequence conflict" description="In Ref. 4; CAA31180." evidence="1" ref="4">
    <original>H</original>
    <variation>Q</variation>
    <location>
        <position position="265"/>
    </location>
</feature>
<feature type="sequence conflict" description="In Ref. 3; CAA29588." evidence="1" ref="3">
    <original>TLLL</original>
    <variation>AAP</variation>
    <location>
        <begin position="287"/>
        <end position="290"/>
    </location>
</feature>
<feature type="sequence conflict" description="In Ref. 3; CAA29588." evidence="1" ref="3">
    <original>MM</original>
    <variation>IV</variation>
    <location>
        <begin position="351"/>
        <end position="352"/>
    </location>
</feature>
<feature type="sequence conflict" description="In Ref. 3; CAA29588." evidence="1" ref="3">
    <location>
        <position position="357"/>
    </location>
</feature>
<feature type="sequence conflict" description="In Ref. 3; CAA29588." evidence="1" ref="3">
    <original>ANKRWQ</original>
    <variation>GQQTLD</variation>
    <location>
        <begin position="395"/>
        <end position="400"/>
    </location>
</feature>
<feature type="sequence conflict" description="In Ref. 3; CAA29588." evidence="1" ref="3">
    <original>P</original>
    <variation>R</variation>
    <location>
        <position position="411"/>
    </location>
</feature>
<feature type="sequence conflict" description="In Ref. 4; CAA31180." evidence="1" ref="4">
    <original>YGRDSE</original>
    <variation>NRARYS</variation>
    <location>
        <begin position="412"/>
        <end position="417"/>
    </location>
</feature>
<feature type="sequence conflict" description="In Ref. 3; CAA29588." evidence="1" ref="3">
    <original>C</original>
    <variation>R</variation>
    <location>
        <position position="422"/>
    </location>
</feature>
<feature type="sequence conflict" description="In Ref. 3; CAA29588." evidence="1" ref="3">
    <original>QPDF</original>
    <variation>SAGL</variation>
    <location>
        <begin position="435"/>
        <end position="438"/>
    </location>
</feature>
<feature type="sequence conflict" description="In Ref. 4; CAA31180." evidence="1" ref="4">
    <original>D</original>
    <variation>V</variation>
    <location>
        <position position="451"/>
    </location>
</feature>
<feature type="sequence conflict" description="In Ref. 3; CAA29588." evidence="1" ref="3">
    <original>W</original>
    <variation>S</variation>
    <location>
        <position position="482"/>
    </location>
</feature>
<feature type="sequence conflict" description="In Ref. 3; CAA29588." evidence="1" ref="3">
    <original>A</original>
    <variation>V</variation>
    <location>
        <position position="497"/>
    </location>
</feature>
<feature type="sequence conflict" description="In Ref. 3; CAA29588." evidence="1" ref="3">
    <original>QL</original>
    <variation>PA</variation>
    <location>
        <begin position="508"/>
        <end position="509"/>
    </location>
</feature>
<feature type="sequence conflict" description="In Ref. 4; CAA31180." evidence="1" ref="4">
    <original>G</original>
    <variation>A</variation>
    <location>
        <position position="510"/>
    </location>
</feature>
<feature type="helix" evidence="2">
    <location>
        <begin position="11"/>
        <end position="14"/>
    </location>
</feature>
<feature type="helix" evidence="2">
    <location>
        <begin position="18"/>
        <end position="28"/>
    </location>
</feature>
<feature type="turn" evidence="2">
    <location>
        <begin position="29"/>
        <end position="32"/>
    </location>
</feature>
<feature type="helix" evidence="2">
    <location>
        <begin position="36"/>
        <end position="46"/>
    </location>
</feature>
<feature type="helix" evidence="2">
    <location>
        <begin position="49"/>
        <end position="55"/>
    </location>
</feature>
<feature type="strand" evidence="2">
    <location>
        <begin position="62"/>
        <end position="64"/>
    </location>
</feature>
<feature type="helix" evidence="2">
    <location>
        <begin position="70"/>
        <end position="79"/>
    </location>
</feature>
<feature type="strand" evidence="2">
    <location>
        <begin position="84"/>
        <end position="90"/>
    </location>
</feature>
<feature type="helix" evidence="2">
    <location>
        <begin position="92"/>
        <end position="106"/>
    </location>
</feature>
<feature type="helix" evidence="2">
    <location>
        <begin position="121"/>
        <end position="124"/>
    </location>
</feature>
<feature type="helix" evidence="2">
    <location>
        <begin position="127"/>
        <end position="141"/>
    </location>
</feature>
<feature type="strand" evidence="2">
    <location>
        <begin position="144"/>
        <end position="150"/>
    </location>
</feature>
<feature type="helix" evidence="2">
    <location>
        <begin position="152"/>
        <end position="157"/>
    </location>
</feature>
<feature type="helix" evidence="2">
    <location>
        <begin position="161"/>
        <end position="170"/>
    </location>
</feature>
<feature type="helix" evidence="2">
    <location>
        <begin position="192"/>
        <end position="208"/>
    </location>
</feature>
<feature type="strand" evidence="2">
    <location>
        <begin position="217"/>
        <end position="224"/>
    </location>
</feature>
<feature type="helix" evidence="2">
    <location>
        <begin position="231"/>
        <end position="244"/>
    </location>
</feature>
<feature type="strand" evidence="2">
    <location>
        <begin position="248"/>
        <end position="252"/>
    </location>
</feature>
<feature type="turn" evidence="2">
    <location>
        <begin position="254"/>
        <end position="258"/>
    </location>
</feature>
<feature type="helix" evidence="2">
    <location>
        <begin position="275"/>
        <end position="280"/>
    </location>
</feature>
<feature type="helix" evidence="2">
    <location>
        <begin position="281"/>
        <end position="283"/>
    </location>
</feature>
<feature type="strand" evidence="2">
    <location>
        <begin position="284"/>
        <end position="291"/>
    </location>
</feature>
<feature type="turn" evidence="2">
    <location>
        <begin position="292"/>
        <end position="294"/>
    </location>
</feature>
<feature type="helix" evidence="2">
    <location>
        <begin position="296"/>
        <end position="304"/>
    </location>
</feature>
<feature type="helix" evidence="2">
    <location>
        <begin position="319"/>
        <end position="333"/>
    </location>
</feature>
<feature type="helix" evidence="2">
    <location>
        <begin position="339"/>
        <end position="359"/>
    </location>
</feature>
<feature type="strand" evidence="2">
    <location>
        <begin position="363"/>
        <end position="368"/>
    </location>
</feature>
<feature type="helix" evidence="2">
    <location>
        <begin position="370"/>
        <end position="382"/>
    </location>
</feature>
<feature type="strand" evidence="2">
    <location>
        <begin position="386"/>
        <end position="392"/>
    </location>
</feature>
<feature type="helix" evidence="2">
    <location>
        <begin position="397"/>
        <end position="409"/>
    </location>
</feature>
<feature type="strand" evidence="2">
    <location>
        <begin position="417"/>
        <end position="421"/>
    </location>
</feature>
<feature type="helix" evidence="2">
    <location>
        <begin position="424"/>
        <end position="434"/>
    </location>
</feature>
<feature type="strand" evidence="2">
    <location>
        <begin position="437"/>
        <end position="441"/>
    </location>
</feature>
<feature type="helix" evidence="2">
    <location>
        <begin position="443"/>
        <end position="445"/>
    </location>
</feature>
<feature type="helix" evidence="2">
    <location>
        <begin position="446"/>
        <end position="455"/>
    </location>
</feature>
<feature type="helix" evidence="2">
    <location>
        <begin position="457"/>
        <end position="459"/>
    </location>
</feature>
<feature type="strand" evidence="2">
    <location>
        <begin position="463"/>
        <end position="465"/>
    </location>
</feature>
<feature type="strand" evidence="2">
    <location>
        <begin position="472"/>
        <end position="475"/>
    </location>
</feature>
<feature type="helix" evidence="2">
    <location>
        <begin position="476"/>
        <end position="478"/>
    </location>
</feature>
<feature type="helix" evidence="2">
    <location>
        <begin position="483"/>
        <end position="505"/>
    </location>
</feature>
<feature type="turn" evidence="2">
    <location>
        <begin position="509"/>
        <end position="511"/>
    </location>
</feature>
<feature type="helix" evidence="2">
    <location>
        <begin position="513"/>
        <end position="515"/>
    </location>
</feature>
<dbReference type="EC" id="1.18.6.1"/>
<dbReference type="EMBL" id="X13303">
    <property type="protein sequence ID" value="CAA31668.1"/>
    <property type="molecule type" value="Genomic_DNA"/>
</dbReference>
<dbReference type="EMBL" id="X07749">
    <property type="protein sequence ID" value="CAA30573.1"/>
    <property type="molecule type" value="Genomic_DNA"/>
</dbReference>
<dbReference type="EMBL" id="X06243">
    <property type="protein sequence ID" value="CAA29588.1"/>
    <property type="molecule type" value="Genomic_DNA"/>
</dbReference>
<dbReference type="EMBL" id="X12649">
    <property type="protein sequence ID" value="CAA31180.1"/>
    <property type="molecule type" value="Genomic_DNA"/>
</dbReference>
<dbReference type="PIR" id="S02505">
    <property type="entry name" value="S02505"/>
</dbReference>
<dbReference type="PDB" id="1H1L">
    <property type="method" value="X-ray"/>
    <property type="resolution" value="1.90 A"/>
    <property type="chains" value="B/D=2-520"/>
</dbReference>
<dbReference type="PDB" id="1QGU">
    <property type="method" value="X-ray"/>
    <property type="resolution" value="1.60 A"/>
    <property type="chains" value="B/D=2-520"/>
</dbReference>
<dbReference type="PDB" id="1QH1">
    <property type="method" value="X-ray"/>
    <property type="resolution" value="1.60 A"/>
    <property type="chains" value="B/D=2-520"/>
</dbReference>
<dbReference type="PDB" id="1QH8">
    <property type="method" value="X-ray"/>
    <property type="resolution" value="1.60 A"/>
    <property type="chains" value="B/D=2-520"/>
</dbReference>
<dbReference type="PDBsum" id="1H1L"/>
<dbReference type="PDBsum" id="1QGU"/>
<dbReference type="PDBsum" id="1QH1"/>
<dbReference type="PDBsum" id="1QH8"/>
<dbReference type="SMR" id="P09772"/>
<dbReference type="DIP" id="DIP-6207N"/>
<dbReference type="BioCyc" id="MetaCyc:NIFKKLEB-MONOMER"/>
<dbReference type="BRENDA" id="1.18.6.1">
    <property type="organism ID" value="2814"/>
</dbReference>
<dbReference type="EvolutionaryTrace" id="P09772"/>
<dbReference type="GO" id="GO:0016612">
    <property type="term" value="C:molybdenum-iron nitrogenase complex"/>
    <property type="evidence" value="ECO:0007669"/>
    <property type="project" value="InterPro"/>
</dbReference>
<dbReference type="GO" id="GO:0005524">
    <property type="term" value="F:ATP binding"/>
    <property type="evidence" value="ECO:0007669"/>
    <property type="project" value="UniProtKB-KW"/>
</dbReference>
<dbReference type="GO" id="GO:0051536">
    <property type="term" value="F:iron-sulfur cluster binding"/>
    <property type="evidence" value="ECO:0007669"/>
    <property type="project" value="UniProtKB-KW"/>
</dbReference>
<dbReference type="GO" id="GO:0046872">
    <property type="term" value="F:metal ion binding"/>
    <property type="evidence" value="ECO:0007669"/>
    <property type="project" value="UniProtKB-KW"/>
</dbReference>
<dbReference type="GO" id="GO:0016163">
    <property type="term" value="F:nitrogenase activity"/>
    <property type="evidence" value="ECO:0007669"/>
    <property type="project" value="UniProtKB-EC"/>
</dbReference>
<dbReference type="GO" id="GO:0009399">
    <property type="term" value="P:nitrogen fixation"/>
    <property type="evidence" value="ECO:0007669"/>
    <property type="project" value="UniProtKB-KW"/>
</dbReference>
<dbReference type="CDD" id="cd01974">
    <property type="entry name" value="Nitrogenase_MoFe_beta"/>
    <property type="match status" value="1"/>
</dbReference>
<dbReference type="Gene3D" id="3.40.50.1980">
    <property type="entry name" value="Nitrogenase molybdenum iron protein domain"/>
    <property type="match status" value="3"/>
</dbReference>
<dbReference type="Gene3D" id="1.20.89.10">
    <property type="entry name" value="Nitrogenase Molybdenum-iron Protein, subunit B, domain 4"/>
    <property type="match status" value="1"/>
</dbReference>
<dbReference type="InterPro" id="IPR050152">
    <property type="entry name" value="ChlB/BchB/BchZ"/>
</dbReference>
<dbReference type="InterPro" id="IPR000510">
    <property type="entry name" value="Nase/OxRdtase_comp1"/>
</dbReference>
<dbReference type="InterPro" id="IPR000318">
    <property type="entry name" value="Nase_comp1_CS"/>
</dbReference>
<dbReference type="InterPro" id="IPR005976">
    <property type="entry name" value="Nase_Mo-Fe_CF_bsu"/>
</dbReference>
<dbReference type="InterPro" id="IPR024564">
    <property type="entry name" value="Nase_Mo-Fe_CF_bsu_N"/>
</dbReference>
<dbReference type="NCBIfam" id="TIGR01286">
    <property type="entry name" value="nifK"/>
    <property type="match status" value="1"/>
</dbReference>
<dbReference type="PANTHER" id="PTHR33712">
    <property type="entry name" value="LIGHT-INDEPENDENT PROTOCHLOROPHYLLIDE REDUCTASE SUBUNIT B"/>
    <property type="match status" value="1"/>
</dbReference>
<dbReference type="PANTHER" id="PTHR33712:SF7">
    <property type="entry name" value="LIGHT-INDEPENDENT PROTOCHLOROPHYLLIDE REDUCTASE SUBUNIT B"/>
    <property type="match status" value="1"/>
</dbReference>
<dbReference type="Pfam" id="PF11844">
    <property type="entry name" value="DUF3364"/>
    <property type="match status" value="1"/>
</dbReference>
<dbReference type="Pfam" id="PF00148">
    <property type="entry name" value="Oxidored_nitro"/>
    <property type="match status" value="1"/>
</dbReference>
<dbReference type="SUPFAM" id="SSF53807">
    <property type="entry name" value="Helical backbone' metal receptor"/>
    <property type="match status" value="1"/>
</dbReference>
<dbReference type="PROSITE" id="PS00699">
    <property type="entry name" value="NITROGENASE_1_1"/>
    <property type="match status" value="1"/>
</dbReference>
<dbReference type="PROSITE" id="PS00090">
    <property type="entry name" value="NITROGENASE_1_2"/>
    <property type="match status" value="1"/>
</dbReference>
<protein>
    <recommendedName>
        <fullName>Nitrogenase molybdenum-iron protein beta chain</fullName>
        <ecNumber>1.18.6.1</ecNumber>
    </recommendedName>
    <alternativeName>
        <fullName>Dinitrogenase</fullName>
    </alternativeName>
    <alternativeName>
        <fullName>Nitrogenase component I</fullName>
    </alternativeName>
</protein>
<reference key="1">
    <citation type="journal article" date="1988" name="J. Mol. Biol.">
        <title>Nucleotide sequence of a 24,206-base-pair DNA fragment carrying the entire nitrogen fixation gene cluster of Klebsiella pneumoniae.</title>
        <authorList>
            <person name="Arnold W."/>
            <person name="Rump A."/>
            <person name="Klipp W."/>
            <person name="Priefer U.B."/>
            <person name="Puehler A."/>
        </authorList>
    </citation>
    <scope>NUCLEOTIDE SEQUENCE [GENOMIC DNA]</scope>
</reference>
<reference key="2">
    <citation type="journal article" date="1988" name="Nucleic Acids Res.">
        <title>Nucleotide and deduced amino acid sequences of the Klebsiella pneumoniae nifK gene coding for the beta-subunit of nitrogenase MoFe protein.</title>
        <authorList>
            <person name="Steinbauer J."/>
            <person name="Wenzel W."/>
            <person name="Hess D."/>
        </authorList>
    </citation>
    <scope>NUCLEOTIDE SEQUENCE [GENOMIC DNA]</scope>
</reference>
<reference key="3">
    <citation type="journal article" date="1987" name="Biochem. J.">
        <title>A quantitative approach to sequence comparisons of nitrogenase MoFe protein alpha- and beta-subunits including the newly sequenced nifK gene from Klebsiella pneumoniae.</title>
        <authorList>
            <person name="Holland D."/>
            <person name="Zilberstein A."/>
            <person name="Zamir A."/>
            <person name="Sussman J.L."/>
        </authorList>
    </citation>
    <scope>NUCLEOTIDE SEQUENCE [GENOMIC DNA]</scope>
</reference>
<reference key="4">
    <citation type="journal article" date="1988" name="Nucleic Acids Res.">
        <title>Nucleotide sequence of nifK and partial sequence of nifD from Frankia species strain FaC1.</title>
        <authorList>
            <person name="Lignon J.M."/>
            <person name="Nakas J.P."/>
        </authorList>
    </citation>
    <scope>NUCLEOTIDE SEQUENCE [GENOMIC DNA]</scope>
</reference>
<reference key="5">
    <citation type="journal article" date="1990" name="Nucleic Acids Res.">
        <authorList>
            <person name="Lignon J.M."/>
            <person name="Nakas J.P."/>
        </authorList>
    </citation>
    <scope>ERRATUM OF PUBMED:3211766</scope>
    <scope>CORRECTION OF ORGANISM GIVEN IN PUBMED:3211766</scope>
</reference>
<reference key="6">
    <citation type="journal article" date="1999" name="J. Mol. Biol.">
        <title>New insights into structure-function relationships in nitrogenase: a 1.6 A resolution X-ray crystallographic study of Klebsiella pneumoniae MoFe-protein.</title>
        <authorList>
            <person name="Mayer S.M."/>
            <person name="Lawson D.M."/>
            <person name="Gormal C.A."/>
            <person name="Roe S.M."/>
            <person name="Smith B.E."/>
        </authorList>
    </citation>
    <scope>X-RAY CRYSTALLOGRAPHY (1.6 ANGSTROMS) OF 3-480</scope>
</reference>
<reference key="7">
    <citation type="journal article" date="2002" name="J. Biol. Chem.">
        <title>Crystallographic analysis of the MoFe protein of nitrogenase from a nifV mutant of Klebsiella pneumoniae identifies citrate as a ligand to the molybdenum of iron molybdenum cofactor (FeMoco).</title>
        <authorList>
            <person name="Mayer S.M."/>
            <person name="Gormal C.A."/>
            <person name="Smith B.E."/>
            <person name="Lawson D.M."/>
        </authorList>
    </citation>
    <scope>X-RAY CRYSTALLOGRAPHY (1.9 ANGSTROMS) OF 3-483</scope>
</reference>